<gene>
    <name evidence="3" type="primary">FCS1</name>
    <name evidence="4" type="synonym">Fcs</name>
</gene>
<evidence type="ECO:0000255" key="1">
    <source>
        <dbReference type="PROSITE-ProRule" id="PRU00409"/>
    </source>
</evidence>
<evidence type="ECO:0000269" key="2">
    <source>
    </source>
</evidence>
<evidence type="ECO:0000303" key="3">
    <source>
    </source>
</evidence>
<evidence type="ECO:0000303" key="4">
    <source ref="1"/>
</evidence>
<evidence type="ECO:0000305" key="5"/>
<evidence type="ECO:0000305" key="6">
    <source>
    </source>
</evidence>
<accession>A0A2P1BT06</accession>
<feature type="chain" id="PRO_0000447891" description="Trans-feruloyl-CoA synthase FCS1">
    <location>
        <begin position="1"/>
        <end position="707"/>
    </location>
</feature>
<feature type="domain" description="ATP-grasp" evidence="1">
    <location>
        <begin position="498"/>
        <end position="549"/>
    </location>
</feature>
<feature type="binding site" evidence="6">
    <location>
        <position position="267"/>
    </location>
    <ligand>
        <name>ATP</name>
        <dbReference type="ChEBI" id="CHEBI:30616"/>
    </ligand>
</feature>
<feature type="binding site" evidence="1">
    <location>
        <begin position="524"/>
        <end position="535"/>
    </location>
    <ligand>
        <name>ATP</name>
        <dbReference type="ChEBI" id="CHEBI:30616"/>
    </ligand>
</feature>
<organism>
    <name type="scientific">Unknown prokaryotic organism</name>
    <dbReference type="NCBI Taxonomy" id="2725"/>
    <lineage>
        <taxon>Bacteria</taxon>
        <taxon>environmental samples</taxon>
    </lineage>
</organism>
<sequence>MGERRFSNQQIDRLLRPKSVAVIGASDRKGALGATLLNNLVQYEFSGDIYPVNPKRDELLGLKVYHEVAELPEGIDCAVLAIPRPFVIDTVRQLAQRGCGAVVIYSAGFSEAGEEGMKDQLELAAIAAEYGMVIEGPNCLGCTNYVERVPLTFVETNMQTPPKGTRAVGIASQSGALAAVLATALHPRGLYVSSSVSTGNEAASGVEDYVEWLVDDEDTHVIAMYVESLRRPKAFIAAARRAHAAGKPIVMLHPGKSNKAQESAATHTGAMAGDYALMKTKLAREGVIFADTLEELADITEIALRCRALPGANMAVLGESGALRGLAFDIAEDIGLDLIHLDDDNSPALRAILPDFVPVSNPTDITALGLSEPEIYTKVLTALLEDERIGSVVASIIQSDPITSGIKFPHIIKVLDGGTFAKPLVFAGVDEGATVPKEYIDGLRKVGIPWFPSTERAYRAIARLADLSKRDLADNSGDPIVVPGLDAVSGVVPEYKAKELLRPLGIAFPPSQFAANAEAAAAAARAIGYPVVMKAQAAALGHKSDAGGVILNLKTDDEVRDAFARIYGNVEAYDRSIALDGVLIEKMGKMGTEMIVGAKNDPQWGPVVLAGFGGVTAEILKDVKLFTPEMDAAAVQRGLLELKQAPILKGYRGAPALDVAALAELIVQIGRVMAGNPSIREIDLNPVIIHPAGEGVAALDALMLVER</sequence>
<dbReference type="EC" id="6.2.1.34" evidence="2"/>
<dbReference type="EMBL" id="MG214406">
    <property type="protein sequence ID" value="AVI57390.1"/>
    <property type="molecule type" value="Genomic_DNA"/>
</dbReference>
<dbReference type="SMR" id="A0A2P1BT06"/>
<dbReference type="GO" id="GO:0005524">
    <property type="term" value="F:ATP binding"/>
    <property type="evidence" value="ECO:0007669"/>
    <property type="project" value="UniProtKB-KW"/>
</dbReference>
<dbReference type="GO" id="GO:0046872">
    <property type="term" value="F:metal ion binding"/>
    <property type="evidence" value="ECO:0007669"/>
    <property type="project" value="InterPro"/>
</dbReference>
<dbReference type="GO" id="GO:0050563">
    <property type="term" value="F:trans-feruloyl-CoA synthase activity"/>
    <property type="evidence" value="ECO:0007669"/>
    <property type="project" value="UniProtKB-EC"/>
</dbReference>
<dbReference type="FunFam" id="3.30.1490.20:FF:000020">
    <property type="entry name" value="Protein lysine acetyltransferase"/>
    <property type="match status" value="1"/>
</dbReference>
<dbReference type="Gene3D" id="3.30.1490.20">
    <property type="entry name" value="ATP-grasp fold, A domain"/>
    <property type="match status" value="1"/>
</dbReference>
<dbReference type="Gene3D" id="3.30.470.20">
    <property type="entry name" value="ATP-grasp fold, B domain"/>
    <property type="match status" value="1"/>
</dbReference>
<dbReference type="Gene3D" id="3.40.50.720">
    <property type="entry name" value="NAD(P)-binding Rossmann-like Domain"/>
    <property type="match status" value="1"/>
</dbReference>
<dbReference type="Gene3D" id="3.40.50.261">
    <property type="entry name" value="Succinyl-CoA synthetase domains"/>
    <property type="match status" value="2"/>
</dbReference>
<dbReference type="InterPro" id="IPR011761">
    <property type="entry name" value="ATP-grasp"/>
</dbReference>
<dbReference type="InterPro" id="IPR013815">
    <property type="entry name" value="ATP_grasp_subdomain_1"/>
</dbReference>
<dbReference type="InterPro" id="IPR003781">
    <property type="entry name" value="CoA-bd"/>
</dbReference>
<dbReference type="InterPro" id="IPR036291">
    <property type="entry name" value="NAD(P)-bd_dom_sf"/>
</dbReference>
<dbReference type="InterPro" id="IPR032875">
    <property type="entry name" value="Succ_CoA_lig_flav_dom"/>
</dbReference>
<dbReference type="InterPro" id="IPR016102">
    <property type="entry name" value="Succinyl-CoA_synth-like"/>
</dbReference>
<dbReference type="PANTHER" id="PTHR42793">
    <property type="entry name" value="COA BINDING DOMAIN CONTAINING PROTEIN"/>
    <property type="match status" value="1"/>
</dbReference>
<dbReference type="PANTHER" id="PTHR42793:SF1">
    <property type="entry name" value="PEPTIDYL-LYSINE N-ACETYLTRANSFERASE PATZ"/>
    <property type="match status" value="1"/>
</dbReference>
<dbReference type="Pfam" id="PF13549">
    <property type="entry name" value="ATP-grasp_5"/>
    <property type="match status" value="1"/>
</dbReference>
<dbReference type="Pfam" id="PF13380">
    <property type="entry name" value="CoA_binding_2"/>
    <property type="match status" value="1"/>
</dbReference>
<dbReference type="Pfam" id="PF13607">
    <property type="entry name" value="Succ_CoA_lig"/>
    <property type="match status" value="1"/>
</dbReference>
<dbReference type="SMART" id="SM00881">
    <property type="entry name" value="CoA_binding"/>
    <property type="match status" value="1"/>
</dbReference>
<dbReference type="SUPFAM" id="SSF56059">
    <property type="entry name" value="Glutathione synthetase ATP-binding domain-like"/>
    <property type="match status" value="1"/>
</dbReference>
<dbReference type="SUPFAM" id="SSF51735">
    <property type="entry name" value="NAD(P)-binding Rossmann-fold domains"/>
    <property type="match status" value="1"/>
</dbReference>
<dbReference type="SUPFAM" id="SSF52210">
    <property type="entry name" value="Succinyl-CoA synthetase domains"/>
    <property type="match status" value="2"/>
</dbReference>
<dbReference type="PROSITE" id="PS50975">
    <property type="entry name" value="ATP_GRASP"/>
    <property type="match status" value="1"/>
</dbReference>
<comment type="function">
    <text evidence="2">Catalyzes the formation of feruloyl-CoA, ADP and phosphate from ferulate, CoA and ATP.</text>
</comment>
<comment type="catalytic activity">
    <reaction evidence="2">
        <text>(E)-ferulate + ATP + CoA = (E)-feruloyl-CoA + ADP + phosphate</text>
        <dbReference type="Rhea" id="RHEA:19389"/>
        <dbReference type="ChEBI" id="CHEBI:29749"/>
        <dbReference type="ChEBI" id="CHEBI:30616"/>
        <dbReference type="ChEBI" id="CHEBI:43474"/>
        <dbReference type="ChEBI" id="CHEBI:57287"/>
        <dbReference type="ChEBI" id="CHEBI:87305"/>
        <dbReference type="ChEBI" id="CHEBI:456216"/>
        <dbReference type="EC" id="6.2.1.34"/>
    </reaction>
    <physiologicalReaction direction="left-to-right" evidence="2">
        <dbReference type="Rhea" id="RHEA:19390"/>
    </physiologicalReaction>
</comment>
<comment type="biophysicochemical properties">
    <kinetics>
        <KM evidence="2">0.1 mM for ferulate</KM>
    </kinetics>
    <phDependence>
        <text evidence="2">Optimum pH is 7.8.</text>
    </phDependence>
    <temperatureDependence>
        <text evidence="2">Optimum temperature is 37 degrees Celsius.</text>
    </temperatureDependence>
</comment>
<comment type="subunit">
    <text evidence="6">Homodimer.</text>
</comment>
<comment type="biotechnology">
    <text evidence="2">Catalyzes the activation of ferulate via CoA-thioesterification, a first enzymatic step for conversion of the lignin-derived ferulate into high value chemicals, such as vanillin and bioplastics.</text>
</comment>
<comment type="similarity">
    <text evidence="5">In the N-terminal section; belongs to the acetate CoA ligase alpha subunit family.</text>
</comment>
<comment type="similarity">
    <text evidence="5">In the C-terminal section; belongs to the acetate CoA ligase beta subunit family.</text>
</comment>
<name>FCS1_UNKP</name>
<protein>
    <recommendedName>
        <fullName evidence="5">Trans-feruloyl-CoA synthase FCS1</fullName>
        <ecNumber evidence="2">6.2.1.34</ecNumber>
    </recommendedName>
    <alternativeName>
        <fullName evidence="4">Feruloyl coenzyme A synthetase</fullName>
    </alternativeName>
    <alternativeName>
        <fullName evidence="5">Trans-feruloyl-CoA synthetase</fullName>
    </alternativeName>
</protein>
<proteinExistence type="evidence at protein level"/>
<keyword id="KW-0067">ATP-binding</keyword>
<keyword id="KW-0436">Ligase</keyword>
<keyword id="KW-0547">Nucleotide-binding</keyword>
<reference key="1">
    <citation type="submission" date="2018-03" db="EMBL/GenBank/DDBJ databases">
        <title>Uncultured organism feruloyl coenzyme A synthetase (fcs) gene.</title>
        <authorList>
            <person name="Tomazetto G."/>
        </authorList>
    </citation>
    <scope>NUCLEOTIDE SEQUENCE [GENOMIC DNA]</scope>
</reference>
<reference key="2">
    <citation type="journal article" date="2019" name="PLoS ONE">
        <title>An alkaline active feruloyl-CoA synthetase from soil metagenome as a potential key enzyme for lignin valorization strategies.</title>
        <authorList>
            <person name="Sodre V."/>
            <person name="Araujo J.N."/>
            <person name="Goncalves T.A."/>
            <person name="Vilela N."/>
            <person name="Braz A.S.K."/>
            <person name="Franco T.T."/>
            <person name="de Oliveira Neto M."/>
            <person name="Damasio A.R.L."/>
            <person name="Garcia W."/>
            <person name="Squina F.M."/>
        </authorList>
    </citation>
    <scope>FUNCTION</scope>
    <scope>CATALYTIC ACTIVITY</scope>
    <scope>BIOPHYSICOCHEMICAL PROPERTIES</scope>
    <scope>SUBUNIT</scope>
    <scope>ATP-BINDING SITE</scope>
    <scope>BIOTECHNOLOGY</scope>
</reference>